<reference key="1">
    <citation type="journal article" date="2003" name="Nature">
        <title>Genome divergence in two Prochlorococcus ecotypes reflects oceanic niche differentiation.</title>
        <authorList>
            <person name="Rocap G."/>
            <person name="Larimer F.W."/>
            <person name="Lamerdin J.E."/>
            <person name="Malfatti S."/>
            <person name="Chain P."/>
            <person name="Ahlgren N.A."/>
            <person name="Arellano A."/>
            <person name="Coleman M."/>
            <person name="Hauser L."/>
            <person name="Hess W.R."/>
            <person name="Johnson Z.I."/>
            <person name="Land M.L."/>
            <person name="Lindell D."/>
            <person name="Post A.F."/>
            <person name="Regala W."/>
            <person name="Shah M."/>
            <person name="Shaw S.L."/>
            <person name="Steglich C."/>
            <person name="Sullivan M.B."/>
            <person name="Ting C.S."/>
            <person name="Tolonen A."/>
            <person name="Webb E.A."/>
            <person name="Zinser E.R."/>
            <person name="Chisholm S.W."/>
        </authorList>
    </citation>
    <scope>NUCLEOTIDE SEQUENCE [LARGE SCALE GENOMIC DNA]</scope>
    <source>
        <strain>CCMP1986 / NIES-2087 / MED4</strain>
    </source>
</reference>
<proteinExistence type="inferred from homology"/>
<evidence type="ECO:0000255" key="1">
    <source>
        <dbReference type="HAMAP-Rule" id="MF_00235"/>
    </source>
</evidence>
<dbReference type="EC" id="2.7.4.3" evidence="1"/>
<dbReference type="EMBL" id="BX548174">
    <property type="protein sequence ID" value="CAE19998.1"/>
    <property type="molecule type" value="Genomic_DNA"/>
</dbReference>
<dbReference type="RefSeq" id="WP_011133167.1">
    <property type="nucleotide sequence ID" value="NC_005072.1"/>
</dbReference>
<dbReference type="SMR" id="Q7UZW3"/>
<dbReference type="STRING" id="59919.PMM1539"/>
<dbReference type="KEGG" id="pmm:PMM1539"/>
<dbReference type="eggNOG" id="COG0563">
    <property type="taxonomic scope" value="Bacteria"/>
</dbReference>
<dbReference type="HOGENOM" id="CLU_032354_4_1_3"/>
<dbReference type="OrthoDB" id="9805030at2"/>
<dbReference type="UniPathway" id="UPA00588">
    <property type="reaction ID" value="UER00649"/>
</dbReference>
<dbReference type="Proteomes" id="UP000001026">
    <property type="component" value="Chromosome"/>
</dbReference>
<dbReference type="GO" id="GO:0005737">
    <property type="term" value="C:cytoplasm"/>
    <property type="evidence" value="ECO:0007669"/>
    <property type="project" value="UniProtKB-SubCell"/>
</dbReference>
<dbReference type="GO" id="GO:0004017">
    <property type="term" value="F:adenylate kinase activity"/>
    <property type="evidence" value="ECO:0007669"/>
    <property type="project" value="UniProtKB-UniRule"/>
</dbReference>
<dbReference type="GO" id="GO:0005524">
    <property type="term" value="F:ATP binding"/>
    <property type="evidence" value="ECO:0007669"/>
    <property type="project" value="UniProtKB-UniRule"/>
</dbReference>
<dbReference type="GO" id="GO:0044209">
    <property type="term" value="P:AMP salvage"/>
    <property type="evidence" value="ECO:0007669"/>
    <property type="project" value="UniProtKB-UniRule"/>
</dbReference>
<dbReference type="CDD" id="cd01428">
    <property type="entry name" value="ADK"/>
    <property type="match status" value="1"/>
</dbReference>
<dbReference type="Gene3D" id="3.40.50.300">
    <property type="entry name" value="P-loop containing nucleotide triphosphate hydrolases"/>
    <property type="match status" value="1"/>
</dbReference>
<dbReference type="HAMAP" id="MF_00235">
    <property type="entry name" value="Adenylate_kinase_Adk"/>
    <property type="match status" value="1"/>
</dbReference>
<dbReference type="InterPro" id="IPR000850">
    <property type="entry name" value="Adenylat/UMP-CMP_kin"/>
</dbReference>
<dbReference type="InterPro" id="IPR033690">
    <property type="entry name" value="Adenylat_kinase_CS"/>
</dbReference>
<dbReference type="InterPro" id="IPR027417">
    <property type="entry name" value="P-loop_NTPase"/>
</dbReference>
<dbReference type="NCBIfam" id="NF001381">
    <property type="entry name" value="PRK00279.1-3"/>
    <property type="match status" value="1"/>
</dbReference>
<dbReference type="NCBIfam" id="NF011100">
    <property type="entry name" value="PRK14527.1"/>
    <property type="match status" value="1"/>
</dbReference>
<dbReference type="NCBIfam" id="NF011104">
    <property type="entry name" value="PRK14531.1"/>
    <property type="match status" value="1"/>
</dbReference>
<dbReference type="PANTHER" id="PTHR23359">
    <property type="entry name" value="NUCLEOTIDE KINASE"/>
    <property type="match status" value="1"/>
</dbReference>
<dbReference type="Pfam" id="PF00406">
    <property type="entry name" value="ADK"/>
    <property type="match status" value="1"/>
</dbReference>
<dbReference type="PRINTS" id="PR00094">
    <property type="entry name" value="ADENYLTKNASE"/>
</dbReference>
<dbReference type="SUPFAM" id="SSF52540">
    <property type="entry name" value="P-loop containing nucleoside triphosphate hydrolases"/>
    <property type="match status" value="1"/>
</dbReference>
<dbReference type="PROSITE" id="PS00113">
    <property type="entry name" value="ADENYLATE_KINASE"/>
    <property type="match status" value="1"/>
</dbReference>
<name>KAD_PROMP</name>
<organism>
    <name type="scientific">Prochlorococcus marinus subsp. pastoris (strain CCMP1986 / NIES-2087 / MED4)</name>
    <dbReference type="NCBI Taxonomy" id="59919"/>
    <lineage>
        <taxon>Bacteria</taxon>
        <taxon>Bacillati</taxon>
        <taxon>Cyanobacteriota</taxon>
        <taxon>Cyanophyceae</taxon>
        <taxon>Synechococcales</taxon>
        <taxon>Prochlorococcaceae</taxon>
        <taxon>Prochlorococcus</taxon>
    </lineage>
</organism>
<sequence>MKKHLLFLGPPGAGKGTQAALLSAANSYLHLSTGELLRKEIDLDTDLGKQVKDIMNRGELVSDQLVLEIVKKNLDKDNNGWILDGYPRNLSQVNSLNDVLININQPLEIVFYLDIPDEVLIKRLLIRGRKDDNEKTIKTRLKIYKETTEPLIEYYKDLALLENIKADGDLKTISADIKQKMACR</sequence>
<protein>
    <recommendedName>
        <fullName evidence="1">Adenylate kinase</fullName>
        <shortName evidence="1">AK</shortName>
        <ecNumber evidence="1">2.7.4.3</ecNumber>
    </recommendedName>
    <alternativeName>
        <fullName evidence="1">ATP-AMP transphosphorylase</fullName>
    </alternativeName>
    <alternativeName>
        <fullName evidence="1">ATP:AMP phosphotransferase</fullName>
    </alternativeName>
    <alternativeName>
        <fullName evidence="1">Adenylate monophosphate kinase</fullName>
    </alternativeName>
</protein>
<feature type="chain" id="PRO_0000158829" description="Adenylate kinase">
    <location>
        <begin position="1"/>
        <end position="184"/>
    </location>
</feature>
<feature type="region of interest" description="NMP" evidence="1">
    <location>
        <begin position="32"/>
        <end position="61"/>
    </location>
</feature>
<feature type="region of interest" description="LID" evidence="1">
    <location>
        <begin position="126"/>
        <end position="132"/>
    </location>
</feature>
<feature type="binding site" evidence="1">
    <location>
        <begin position="12"/>
        <end position="17"/>
    </location>
    <ligand>
        <name>ATP</name>
        <dbReference type="ChEBI" id="CHEBI:30616"/>
    </ligand>
</feature>
<feature type="binding site" evidence="1">
    <location>
        <position position="33"/>
    </location>
    <ligand>
        <name>AMP</name>
        <dbReference type="ChEBI" id="CHEBI:456215"/>
    </ligand>
</feature>
<feature type="binding site" evidence="1">
    <location>
        <position position="38"/>
    </location>
    <ligand>
        <name>AMP</name>
        <dbReference type="ChEBI" id="CHEBI:456215"/>
    </ligand>
</feature>
<feature type="binding site" evidence="1">
    <location>
        <begin position="59"/>
        <end position="61"/>
    </location>
    <ligand>
        <name>AMP</name>
        <dbReference type="ChEBI" id="CHEBI:456215"/>
    </ligand>
</feature>
<feature type="binding site" evidence="1">
    <location>
        <begin position="85"/>
        <end position="88"/>
    </location>
    <ligand>
        <name>AMP</name>
        <dbReference type="ChEBI" id="CHEBI:456215"/>
    </ligand>
</feature>
<feature type="binding site" evidence="1">
    <location>
        <position position="92"/>
    </location>
    <ligand>
        <name>AMP</name>
        <dbReference type="ChEBI" id="CHEBI:456215"/>
    </ligand>
</feature>
<feature type="binding site" evidence="1">
    <location>
        <position position="127"/>
    </location>
    <ligand>
        <name>ATP</name>
        <dbReference type="ChEBI" id="CHEBI:30616"/>
    </ligand>
</feature>
<feature type="binding site" evidence="1">
    <location>
        <position position="129"/>
    </location>
    <ligand>
        <name>AMP</name>
        <dbReference type="ChEBI" id="CHEBI:456215"/>
    </ligand>
</feature>
<feature type="binding site" evidence="1">
    <location>
        <position position="140"/>
    </location>
    <ligand>
        <name>AMP</name>
        <dbReference type="ChEBI" id="CHEBI:456215"/>
    </ligand>
</feature>
<feature type="binding site" evidence="1">
    <location>
        <position position="168"/>
    </location>
    <ligand>
        <name>ATP</name>
        <dbReference type="ChEBI" id="CHEBI:30616"/>
    </ligand>
</feature>
<comment type="function">
    <text evidence="1">Catalyzes the reversible transfer of the terminal phosphate group between ATP and AMP. Plays an important role in cellular energy homeostasis and in adenine nucleotide metabolism.</text>
</comment>
<comment type="catalytic activity">
    <reaction evidence="1">
        <text>AMP + ATP = 2 ADP</text>
        <dbReference type="Rhea" id="RHEA:12973"/>
        <dbReference type="ChEBI" id="CHEBI:30616"/>
        <dbReference type="ChEBI" id="CHEBI:456215"/>
        <dbReference type="ChEBI" id="CHEBI:456216"/>
        <dbReference type="EC" id="2.7.4.3"/>
    </reaction>
</comment>
<comment type="pathway">
    <text evidence="1">Purine metabolism; AMP biosynthesis via salvage pathway; AMP from ADP: step 1/1.</text>
</comment>
<comment type="subunit">
    <text evidence="1">Monomer.</text>
</comment>
<comment type="subcellular location">
    <subcellularLocation>
        <location evidence="1">Cytoplasm</location>
    </subcellularLocation>
</comment>
<comment type="domain">
    <text evidence="1">Consists of three domains, a large central CORE domain and two small peripheral domains, NMPbind and LID, which undergo movements during catalysis. The LID domain closes over the site of phosphoryl transfer upon ATP binding. Assembling and dissambling the active center during each catalytic cycle provides an effective means to prevent ATP hydrolysis.</text>
</comment>
<comment type="similarity">
    <text evidence="1">Belongs to the adenylate kinase family.</text>
</comment>
<gene>
    <name evidence="1" type="primary">adk</name>
    <name type="ordered locus">PMM1539</name>
</gene>
<accession>Q7UZW3</accession>
<keyword id="KW-0067">ATP-binding</keyword>
<keyword id="KW-0963">Cytoplasm</keyword>
<keyword id="KW-0418">Kinase</keyword>
<keyword id="KW-0545">Nucleotide biosynthesis</keyword>
<keyword id="KW-0547">Nucleotide-binding</keyword>
<keyword id="KW-0808">Transferase</keyword>